<organismHost>
    <name type="scientific">Microplitis demolitor</name>
    <name type="common">Parasitoid wasp</name>
    <dbReference type="NCBI Taxonomy" id="69319"/>
</organismHost>
<comment type="similarity">
    <text evidence="2">Belongs to the protein-tyrosine phosphatase family.</text>
</comment>
<comment type="caution">
    <text evidence="2">PTP-H1 does not appear to be a functional PTP.</text>
</comment>
<protein>
    <recommendedName>
        <fullName>Tyrosine phosphatase-like protein H1</fullName>
        <shortName>PTP-H1</shortName>
    </recommendedName>
</protein>
<organism>
    <name type="scientific">Microplitis demolitor bracovirus (isolate Webb)</name>
    <name type="common">MdBV</name>
    <dbReference type="NCBI Taxonomy" id="654919"/>
    <lineage>
        <taxon>Viruses</taxon>
        <taxon>Viruses incertae sedis</taxon>
        <taxon>Polydnaviriformidae</taxon>
        <taxon>Bracoviriform</taxon>
        <taxon>Microplitis demolitor bracovirus</taxon>
    </lineage>
</organism>
<accession>Q5I147</accession>
<name>PTPH1_MDBVW</name>
<keyword id="KW-1185">Reference proteome</keyword>
<dbReference type="EMBL" id="AY875685">
    <property type="protein sequence ID" value="AAW51785.1"/>
    <property type="molecule type" value="Genomic_DNA"/>
</dbReference>
<dbReference type="RefSeq" id="YP_239381.1">
    <property type="nucleotide sequence ID" value="NC_007035.1"/>
</dbReference>
<dbReference type="SMR" id="Q5I147"/>
<dbReference type="KEGG" id="vg:5075816"/>
<dbReference type="Proteomes" id="UP000008168">
    <property type="component" value="Genome"/>
</dbReference>
<dbReference type="GO" id="GO:0004725">
    <property type="term" value="F:protein tyrosine phosphatase activity"/>
    <property type="evidence" value="ECO:0007669"/>
    <property type="project" value="InterPro"/>
</dbReference>
<dbReference type="Gene3D" id="3.90.190.10">
    <property type="entry name" value="Protein tyrosine phosphatase superfamily"/>
    <property type="match status" value="1"/>
</dbReference>
<dbReference type="InterPro" id="IPR029021">
    <property type="entry name" value="Prot-tyrosine_phosphatase-like"/>
</dbReference>
<dbReference type="InterPro" id="IPR050348">
    <property type="entry name" value="Protein-Tyr_Phosphatase"/>
</dbReference>
<dbReference type="InterPro" id="IPR000242">
    <property type="entry name" value="PTP_cat"/>
</dbReference>
<dbReference type="InterPro" id="IPR003595">
    <property type="entry name" value="Tyr_Pase_cat"/>
</dbReference>
<dbReference type="InterPro" id="IPR000387">
    <property type="entry name" value="Tyr_Pase_dom"/>
</dbReference>
<dbReference type="PANTHER" id="PTHR19134">
    <property type="entry name" value="RECEPTOR-TYPE TYROSINE-PROTEIN PHOSPHATASE"/>
    <property type="match status" value="1"/>
</dbReference>
<dbReference type="PANTHER" id="PTHR19134:SF449">
    <property type="entry name" value="TYROSINE-PROTEIN PHOSPHATASE 1"/>
    <property type="match status" value="1"/>
</dbReference>
<dbReference type="Pfam" id="PF00102">
    <property type="entry name" value="Y_phosphatase"/>
    <property type="match status" value="1"/>
</dbReference>
<dbReference type="PRINTS" id="PR00700">
    <property type="entry name" value="PRTYPHPHTASE"/>
</dbReference>
<dbReference type="SMART" id="SM00194">
    <property type="entry name" value="PTPc"/>
    <property type="match status" value="1"/>
</dbReference>
<dbReference type="SMART" id="SM00404">
    <property type="entry name" value="PTPc_motif"/>
    <property type="match status" value="1"/>
</dbReference>
<dbReference type="SUPFAM" id="SSF52799">
    <property type="entry name" value="(Phosphotyrosine protein) phosphatases II"/>
    <property type="match status" value="1"/>
</dbReference>
<dbReference type="PROSITE" id="PS50056">
    <property type="entry name" value="TYR_PHOSPHATASE_2"/>
    <property type="match status" value="1"/>
</dbReference>
<dbReference type="PROSITE" id="PS50055">
    <property type="entry name" value="TYR_PHOSPHATASE_PTP"/>
    <property type="match status" value="1"/>
</dbReference>
<reference key="1">
    <citation type="journal article" date="2006" name="Virology">
        <title>Polydnavirus genomes reflect their dual roles as mutualists and pathogens.</title>
        <authorList>
            <person name="Webb B.A."/>
            <person name="Strand M.R."/>
            <person name="Dickey S.E."/>
            <person name="Beck M.H."/>
            <person name="Hilgarth R.S."/>
            <person name="Barney W.E."/>
            <person name="Kadash K."/>
            <person name="Kroemer J.A."/>
            <person name="Lindstrom K.G."/>
            <person name="Rattanadechakul W."/>
            <person name="Shelby K.S."/>
            <person name="Thoetkiattikul H."/>
            <person name="Turnbull M.W."/>
            <person name="Witherell R.A."/>
        </authorList>
    </citation>
    <scope>NUCLEOTIDE SEQUENCE [GENOMIC DNA]</scope>
</reference>
<reference key="2">
    <citation type="journal article" date="2007" name="J. Virol.">
        <title>PTP-H2 and PTP-H3 from Microplitis demolitor Bracovirus localize to focal adhesions and are antiphagocytic in insect immune cells.</title>
        <authorList>
            <person name="Pruijssers A.J."/>
            <person name="Strand M.R."/>
        </authorList>
    </citation>
    <scope>ABSENCE OF CATALYTIC ACTIVITY</scope>
</reference>
<evidence type="ECO:0000255" key="1">
    <source>
        <dbReference type="PROSITE-ProRule" id="PRU00160"/>
    </source>
</evidence>
<evidence type="ECO:0000305" key="2"/>
<gene>
    <name type="primary">H1</name>
</gene>
<sequence>MGRHSFKTVSIDEFLELTLRPDLLNLIKKEHHKLMKVKLPGTIANFSRPENSSKNRSTLFPCWDESRVILKSPSKGIPYDNDITSTYIHANFVDGFKDKNKFICSQSPMENTCEDFWRMILQENCHIIVSLTKVDNAVYCYEYWANEKYREKVFGKYVIKTLEIIEEEVFTRSRLLLTDTNNDISQEIHHFWYTNFPLHYGWPIMSPELLNLIFHVDQKREELMNTTGSGPIVIHCSKIVSWTGIFCTIYNALSQVREEKTVSLPQTVLNIRKKRHSSIMNWVEYEICYRVLCEAILNLKTFMYCNLEIFSAFQDKVAAINFYFGKSHNKHSFNNK</sequence>
<feature type="chain" id="PRO_0000405371" description="Tyrosine phosphatase-like protein H1">
    <location>
        <begin position="1"/>
        <end position="336"/>
    </location>
</feature>
<feature type="domain" description="Tyrosine-protein phosphatase" evidence="1">
    <location>
        <begin position="27"/>
        <end position="295"/>
    </location>
</feature>
<proteinExistence type="evidence at protein level"/>